<reference key="1">
    <citation type="journal article" date="2006" name="Genome Biol.">
        <title>The genome of Rhizobium leguminosarum has recognizable core and accessory components.</title>
        <authorList>
            <person name="Young J.P.W."/>
            <person name="Crossman L.C."/>
            <person name="Johnston A.W.B."/>
            <person name="Thomson N.R."/>
            <person name="Ghazoui Z.F."/>
            <person name="Hull K.H."/>
            <person name="Wexler M."/>
            <person name="Curson A.R.J."/>
            <person name="Todd J.D."/>
            <person name="Poole P.S."/>
            <person name="Mauchline T.H."/>
            <person name="East A.K."/>
            <person name="Quail M.A."/>
            <person name="Churcher C."/>
            <person name="Arrowsmith C."/>
            <person name="Cherevach I."/>
            <person name="Chillingworth T."/>
            <person name="Clarke K."/>
            <person name="Cronin A."/>
            <person name="Davis P."/>
            <person name="Fraser A."/>
            <person name="Hance Z."/>
            <person name="Hauser H."/>
            <person name="Jagels K."/>
            <person name="Moule S."/>
            <person name="Mungall K."/>
            <person name="Norbertczak H."/>
            <person name="Rabbinowitsch E."/>
            <person name="Sanders M."/>
            <person name="Simmonds M."/>
            <person name="Whitehead S."/>
            <person name="Parkhill J."/>
        </authorList>
    </citation>
    <scope>NUCLEOTIDE SEQUENCE [LARGE SCALE GENOMIC DNA]</scope>
    <source>
        <strain>DSM 114642 / LMG 32736 / 3841</strain>
    </source>
</reference>
<protein>
    <recommendedName>
        <fullName evidence="1">Deoxyguanosinetriphosphate triphosphohydrolase-like protein</fullName>
    </recommendedName>
</protein>
<organism>
    <name type="scientific">Rhizobium johnstonii (strain DSM 114642 / LMG 32736 / 3841)</name>
    <name type="common">Rhizobium leguminosarum bv. viciae</name>
    <dbReference type="NCBI Taxonomy" id="216596"/>
    <lineage>
        <taxon>Bacteria</taxon>
        <taxon>Pseudomonadati</taxon>
        <taxon>Pseudomonadota</taxon>
        <taxon>Alphaproteobacteria</taxon>
        <taxon>Hyphomicrobiales</taxon>
        <taxon>Rhizobiaceae</taxon>
        <taxon>Rhizobium/Agrobacterium group</taxon>
        <taxon>Rhizobium</taxon>
        <taxon>Rhizobium johnstonii</taxon>
    </lineage>
</organism>
<feature type="chain" id="PRO_1000066433" description="Deoxyguanosinetriphosphate triphosphohydrolase-like protein">
    <location>
        <begin position="1"/>
        <end position="405"/>
    </location>
</feature>
<feature type="domain" description="HD" evidence="2">
    <location>
        <begin position="75"/>
        <end position="219"/>
    </location>
</feature>
<sequence>MTIDTRALGFGSSERAVYAADPWTTRGRLYQEDGSPTRSDFQRDRDRIVHTTAFRRLKHKTQVFIAQDGDHYRTRLTHTIEVAQIARALARALKLDEDLAEGVALVHDFGHTPFGHTGEDALHEVLLPYGGFDHNAQSLRIVTKLERRYAEFDGINLTWESLEGLVKHNGPLLTADGVGTRGPVPQPILDYCELHDLELATYASLEAQVAAIADDIAYNTHDIDDGLRSGYLTFDMLEEIPFLAGLMAEVRARYPHLEPSRFTHEIMRRQITRMVEDVIGVAQQRLSLLRPESAADIRAADRVIATFSEGMAETDRQIKAMLFKRIYRNPDIMRIRAGAAQIVTDLFAAYMANPKEMQSHYWVDHIAGLSDAPKARHVGDYLAGMTDTYAISAHRRLFDHTPDLR</sequence>
<name>DGTL1_RHIJ3</name>
<dbReference type="EMBL" id="AM236080">
    <property type="protein sequence ID" value="CAK07532.1"/>
    <property type="molecule type" value="Genomic_DNA"/>
</dbReference>
<dbReference type="RefSeq" id="WP_011651650.1">
    <property type="nucleotide sequence ID" value="NC_008380.1"/>
</dbReference>
<dbReference type="SMR" id="Q1MHN1"/>
<dbReference type="EnsemblBacteria" id="CAK07532">
    <property type="protein sequence ID" value="CAK07532"/>
    <property type="gene ID" value="RL2040"/>
</dbReference>
<dbReference type="KEGG" id="rle:RL2040"/>
<dbReference type="eggNOG" id="COG0232">
    <property type="taxonomic scope" value="Bacteria"/>
</dbReference>
<dbReference type="HOGENOM" id="CLU_028163_1_0_5"/>
<dbReference type="Proteomes" id="UP000006575">
    <property type="component" value="Chromosome"/>
</dbReference>
<dbReference type="GO" id="GO:0008832">
    <property type="term" value="F:dGTPase activity"/>
    <property type="evidence" value="ECO:0007669"/>
    <property type="project" value="TreeGrafter"/>
</dbReference>
<dbReference type="GO" id="GO:0006203">
    <property type="term" value="P:dGTP catabolic process"/>
    <property type="evidence" value="ECO:0007669"/>
    <property type="project" value="TreeGrafter"/>
</dbReference>
<dbReference type="CDD" id="cd00077">
    <property type="entry name" value="HDc"/>
    <property type="match status" value="1"/>
</dbReference>
<dbReference type="Gene3D" id="1.10.3210.10">
    <property type="entry name" value="Hypothetical protein af1432"/>
    <property type="match status" value="1"/>
</dbReference>
<dbReference type="HAMAP" id="MF_01212">
    <property type="entry name" value="dGTPase_type2"/>
    <property type="match status" value="1"/>
</dbReference>
<dbReference type="InterPro" id="IPR006261">
    <property type="entry name" value="dGTPase"/>
</dbReference>
<dbReference type="InterPro" id="IPR050135">
    <property type="entry name" value="dGTPase-like"/>
</dbReference>
<dbReference type="InterPro" id="IPR023023">
    <property type="entry name" value="dNTPase_2"/>
</dbReference>
<dbReference type="InterPro" id="IPR003607">
    <property type="entry name" value="HD/PDEase_dom"/>
</dbReference>
<dbReference type="InterPro" id="IPR006674">
    <property type="entry name" value="HD_domain"/>
</dbReference>
<dbReference type="InterPro" id="IPR026875">
    <property type="entry name" value="PHydrolase_assoc_dom"/>
</dbReference>
<dbReference type="NCBIfam" id="TIGR01353">
    <property type="entry name" value="dGTP_triPase"/>
    <property type="match status" value="1"/>
</dbReference>
<dbReference type="NCBIfam" id="NF002326">
    <property type="entry name" value="PRK01286.1-1"/>
    <property type="match status" value="1"/>
</dbReference>
<dbReference type="NCBIfam" id="NF002328">
    <property type="entry name" value="PRK01286.1-3"/>
    <property type="match status" value="1"/>
</dbReference>
<dbReference type="PANTHER" id="PTHR11373:SF43">
    <property type="entry name" value="DEOXYGUANOSINETRIPHOSPHATE TRIPHOSPHOHYDROLASE-LIKE PROTEIN"/>
    <property type="match status" value="1"/>
</dbReference>
<dbReference type="PANTHER" id="PTHR11373">
    <property type="entry name" value="DEOXYNUCLEOSIDE TRIPHOSPHATE TRIPHOSPHOHYDROLASE"/>
    <property type="match status" value="1"/>
</dbReference>
<dbReference type="Pfam" id="PF01966">
    <property type="entry name" value="HD"/>
    <property type="match status" value="1"/>
</dbReference>
<dbReference type="Pfam" id="PF13286">
    <property type="entry name" value="HD_assoc"/>
    <property type="match status" value="1"/>
</dbReference>
<dbReference type="SMART" id="SM00471">
    <property type="entry name" value="HDc"/>
    <property type="match status" value="1"/>
</dbReference>
<dbReference type="SUPFAM" id="SSF109604">
    <property type="entry name" value="HD-domain/PDEase-like"/>
    <property type="match status" value="1"/>
</dbReference>
<dbReference type="PROSITE" id="PS51831">
    <property type="entry name" value="HD"/>
    <property type="match status" value="1"/>
</dbReference>
<comment type="similarity">
    <text evidence="1">Belongs to the dGTPase family. Type 2 subfamily.</text>
</comment>
<gene>
    <name type="ordered locus">RL2040</name>
</gene>
<evidence type="ECO:0000255" key="1">
    <source>
        <dbReference type="HAMAP-Rule" id="MF_01212"/>
    </source>
</evidence>
<evidence type="ECO:0000255" key="2">
    <source>
        <dbReference type="PROSITE-ProRule" id="PRU01175"/>
    </source>
</evidence>
<proteinExistence type="inferred from homology"/>
<keyword id="KW-0378">Hydrolase</keyword>
<accession>Q1MHN1</accession>